<reference key="1">
    <citation type="submission" date="2003-09" db="EMBL/GenBank/DDBJ databases">
        <title>Molecular evidence for unrecognized biodiversity in the bat genus Micronycteris (Phyllostomidae), with descriptions of two new subgenera.</title>
        <authorList>
            <person name="Porter C.A."/>
            <person name="Hoofer S.R."/>
            <person name="Cline C.A."/>
            <person name="Hoffmann F.G."/>
            <person name="Baker R.J."/>
        </authorList>
    </citation>
    <scope>NUCLEOTIDE SEQUENCE [GENOMIC DNA]</scope>
</reference>
<protein>
    <recommendedName>
        <fullName>Cytochrome b</fullName>
    </recommendedName>
    <alternativeName>
        <fullName>Complex III subunit 3</fullName>
    </alternativeName>
    <alternativeName>
        <fullName>Complex III subunit III</fullName>
    </alternativeName>
    <alternativeName>
        <fullName>Cytochrome b-c1 complex subunit 3</fullName>
    </alternativeName>
    <alternativeName>
        <fullName>Ubiquinol-cytochrome-c reductase complex cytochrome b subunit</fullName>
    </alternativeName>
</protein>
<organism>
    <name type="scientific">Glyphonycteris sylvestris</name>
    <name type="common">Tri-colored big-eared bat</name>
    <name type="synonym">Micronycteris sylvestris</name>
    <dbReference type="NCBI Taxonomy" id="409029"/>
    <lineage>
        <taxon>Eukaryota</taxon>
        <taxon>Metazoa</taxon>
        <taxon>Chordata</taxon>
        <taxon>Craniata</taxon>
        <taxon>Vertebrata</taxon>
        <taxon>Euteleostomi</taxon>
        <taxon>Mammalia</taxon>
        <taxon>Eutheria</taxon>
        <taxon>Laurasiatheria</taxon>
        <taxon>Chiroptera</taxon>
        <taxon>Yangochiroptera</taxon>
        <taxon>Phyllostomidae</taxon>
        <taxon>Phyllostominae</taxon>
        <taxon>Glyphonycteris</taxon>
    </lineage>
</organism>
<name>CYB_GLYSY</name>
<gene>
    <name type="primary">MT-CYB</name>
    <name type="synonym">COB</name>
    <name type="synonym">CYTB</name>
    <name type="synonym">MTCYB</name>
</gene>
<proteinExistence type="inferred from homology"/>
<sequence length="379" mass="42882">MTNIRKTHPLLKIINNSFVDLPAPSNLSSWWNFGSLLGVCLAVQILTGLFLAMHYTSDTATAFNSVTHICRDVNYGWLLRYLHANGASMFFICLYLHIGRGLYYGSYMYSETWNIGILLLFTVMATAFMGYVLPWGQMSFWGATVITNLLSAIPYIGTDLVQWIWGGFSVDKATLTRFFAFHFLLPFLVAALVMVHLLFLHETGSNNPTGIPSDSDMIPFHPYYTIKDILGLLIMLSALSSLVLFSPDLLGDPDNYIPANPLNTPPHIKPEWYFLFAYAILRSIPNKLGGVLALILSILILAIMPMLHLSKQRSMMFRPLSQCLFWLLVMILLTLTWIGGQPVEHPYIIIGQMASILYFSILLIFMPLTSIMENYLLKW</sequence>
<accession>Q597F0</accession>
<dbReference type="EMBL" id="AY380746">
    <property type="protein sequence ID" value="AAR91759.1"/>
    <property type="molecule type" value="Genomic_DNA"/>
</dbReference>
<dbReference type="SMR" id="Q597F0"/>
<dbReference type="GO" id="GO:0005743">
    <property type="term" value="C:mitochondrial inner membrane"/>
    <property type="evidence" value="ECO:0007669"/>
    <property type="project" value="UniProtKB-SubCell"/>
</dbReference>
<dbReference type="GO" id="GO:0045275">
    <property type="term" value="C:respiratory chain complex III"/>
    <property type="evidence" value="ECO:0007669"/>
    <property type="project" value="InterPro"/>
</dbReference>
<dbReference type="GO" id="GO:0046872">
    <property type="term" value="F:metal ion binding"/>
    <property type="evidence" value="ECO:0007669"/>
    <property type="project" value="UniProtKB-KW"/>
</dbReference>
<dbReference type="GO" id="GO:0008121">
    <property type="term" value="F:ubiquinol-cytochrome-c reductase activity"/>
    <property type="evidence" value="ECO:0007669"/>
    <property type="project" value="InterPro"/>
</dbReference>
<dbReference type="GO" id="GO:0006122">
    <property type="term" value="P:mitochondrial electron transport, ubiquinol to cytochrome c"/>
    <property type="evidence" value="ECO:0007669"/>
    <property type="project" value="TreeGrafter"/>
</dbReference>
<dbReference type="CDD" id="cd00290">
    <property type="entry name" value="cytochrome_b_C"/>
    <property type="match status" value="1"/>
</dbReference>
<dbReference type="CDD" id="cd00284">
    <property type="entry name" value="Cytochrome_b_N"/>
    <property type="match status" value="1"/>
</dbReference>
<dbReference type="FunFam" id="1.20.810.10:FF:000002">
    <property type="entry name" value="Cytochrome b"/>
    <property type="match status" value="1"/>
</dbReference>
<dbReference type="Gene3D" id="1.20.810.10">
    <property type="entry name" value="Cytochrome Bc1 Complex, Chain C"/>
    <property type="match status" value="1"/>
</dbReference>
<dbReference type="InterPro" id="IPR005798">
    <property type="entry name" value="Cyt_b/b6_C"/>
</dbReference>
<dbReference type="InterPro" id="IPR036150">
    <property type="entry name" value="Cyt_b/b6_C_sf"/>
</dbReference>
<dbReference type="InterPro" id="IPR005797">
    <property type="entry name" value="Cyt_b/b6_N"/>
</dbReference>
<dbReference type="InterPro" id="IPR027387">
    <property type="entry name" value="Cytb/b6-like_sf"/>
</dbReference>
<dbReference type="InterPro" id="IPR030689">
    <property type="entry name" value="Cytochrome_b"/>
</dbReference>
<dbReference type="InterPro" id="IPR048260">
    <property type="entry name" value="Cytochrome_b_C_euk/bac"/>
</dbReference>
<dbReference type="InterPro" id="IPR048259">
    <property type="entry name" value="Cytochrome_b_N_euk/bac"/>
</dbReference>
<dbReference type="InterPro" id="IPR016174">
    <property type="entry name" value="Di-haem_cyt_TM"/>
</dbReference>
<dbReference type="PANTHER" id="PTHR19271">
    <property type="entry name" value="CYTOCHROME B"/>
    <property type="match status" value="1"/>
</dbReference>
<dbReference type="PANTHER" id="PTHR19271:SF16">
    <property type="entry name" value="CYTOCHROME B"/>
    <property type="match status" value="1"/>
</dbReference>
<dbReference type="Pfam" id="PF00032">
    <property type="entry name" value="Cytochrom_B_C"/>
    <property type="match status" value="1"/>
</dbReference>
<dbReference type="Pfam" id="PF00033">
    <property type="entry name" value="Cytochrome_B"/>
    <property type="match status" value="1"/>
</dbReference>
<dbReference type="PIRSF" id="PIRSF038885">
    <property type="entry name" value="COB"/>
    <property type="match status" value="1"/>
</dbReference>
<dbReference type="SUPFAM" id="SSF81648">
    <property type="entry name" value="a domain/subunit of cytochrome bc1 complex (Ubiquinol-cytochrome c reductase)"/>
    <property type="match status" value="1"/>
</dbReference>
<dbReference type="SUPFAM" id="SSF81342">
    <property type="entry name" value="Transmembrane di-heme cytochromes"/>
    <property type="match status" value="1"/>
</dbReference>
<dbReference type="PROSITE" id="PS51003">
    <property type="entry name" value="CYTB_CTER"/>
    <property type="match status" value="1"/>
</dbReference>
<dbReference type="PROSITE" id="PS51002">
    <property type="entry name" value="CYTB_NTER"/>
    <property type="match status" value="1"/>
</dbReference>
<evidence type="ECO:0000250" key="1"/>
<evidence type="ECO:0000250" key="2">
    <source>
        <dbReference type="UniProtKB" id="P00157"/>
    </source>
</evidence>
<evidence type="ECO:0000255" key="3">
    <source>
        <dbReference type="PROSITE-ProRule" id="PRU00967"/>
    </source>
</evidence>
<evidence type="ECO:0000255" key="4">
    <source>
        <dbReference type="PROSITE-ProRule" id="PRU00968"/>
    </source>
</evidence>
<keyword id="KW-0249">Electron transport</keyword>
<keyword id="KW-0349">Heme</keyword>
<keyword id="KW-0408">Iron</keyword>
<keyword id="KW-0472">Membrane</keyword>
<keyword id="KW-0479">Metal-binding</keyword>
<keyword id="KW-0496">Mitochondrion</keyword>
<keyword id="KW-0999">Mitochondrion inner membrane</keyword>
<keyword id="KW-0679">Respiratory chain</keyword>
<keyword id="KW-0812">Transmembrane</keyword>
<keyword id="KW-1133">Transmembrane helix</keyword>
<keyword id="KW-0813">Transport</keyword>
<keyword id="KW-0830">Ubiquinone</keyword>
<feature type="chain" id="PRO_0000254824" description="Cytochrome b">
    <location>
        <begin position="1"/>
        <end position="379"/>
    </location>
</feature>
<feature type="transmembrane region" description="Helical" evidence="2">
    <location>
        <begin position="33"/>
        <end position="53"/>
    </location>
</feature>
<feature type="transmembrane region" description="Helical" evidence="2">
    <location>
        <begin position="77"/>
        <end position="98"/>
    </location>
</feature>
<feature type="transmembrane region" description="Helical" evidence="2">
    <location>
        <begin position="113"/>
        <end position="133"/>
    </location>
</feature>
<feature type="transmembrane region" description="Helical" evidence="2">
    <location>
        <begin position="178"/>
        <end position="198"/>
    </location>
</feature>
<feature type="transmembrane region" description="Helical" evidence="2">
    <location>
        <begin position="226"/>
        <end position="246"/>
    </location>
</feature>
<feature type="transmembrane region" description="Helical" evidence="2">
    <location>
        <begin position="288"/>
        <end position="308"/>
    </location>
</feature>
<feature type="transmembrane region" description="Helical" evidence="2">
    <location>
        <begin position="320"/>
        <end position="340"/>
    </location>
</feature>
<feature type="transmembrane region" description="Helical" evidence="2">
    <location>
        <begin position="347"/>
        <end position="367"/>
    </location>
</feature>
<feature type="binding site" description="axial binding residue" evidence="2">
    <location>
        <position position="83"/>
    </location>
    <ligand>
        <name>heme b</name>
        <dbReference type="ChEBI" id="CHEBI:60344"/>
        <label>b562</label>
    </ligand>
    <ligandPart>
        <name>Fe</name>
        <dbReference type="ChEBI" id="CHEBI:18248"/>
    </ligandPart>
</feature>
<feature type="binding site" description="axial binding residue" evidence="2">
    <location>
        <position position="97"/>
    </location>
    <ligand>
        <name>heme b</name>
        <dbReference type="ChEBI" id="CHEBI:60344"/>
        <label>b566</label>
    </ligand>
    <ligandPart>
        <name>Fe</name>
        <dbReference type="ChEBI" id="CHEBI:18248"/>
    </ligandPart>
</feature>
<feature type="binding site" description="axial binding residue" evidence="2">
    <location>
        <position position="182"/>
    </location>
    <ligand>
        <name>heme b</name>
        <dbReference type="ChEBI" id="CHEBI:60344"/>
        <label>b562</label>
    </ligand>
    <ligandPart>
        <name>Fe</name>
        <dbReference type="ChEBI" id="CHEBI:18248"/>
    </ligandPart>
</feature>
<feature type="binding site" description="axial binding residue" evidence="2">
    <location>
        <position position="196"/>
    </location>
    <ligand>
        <name>heme b</name>
        <dbReference type="ChEBI" id="CHEBI:60344"/>
        <label>b566</label>
    </ligand>
    <ligandPart>
        <name>Fe</name>
        <dbReference type="ChEBI" id="CHEBI:18248"/>
    </ligandPart>
</feature>
<feature type="binding site" evidence="2">
    <location>
        <position position="201"/>
    </location>
    <ligand>
        <name>a ubiquinone</name>
        <dbReference type="ChEBI" id="CHEBI:16389"/>
    </ligand>
</feature>
<geneLocation type="mitochondrion"/>
<comment type="function">
    <text evidence="2">Component of the ubiquinol-cytochrome c reductase complex (complex III or cytochrome b-c1 complex) that is part of the mitochondrial respiratory chain. The b-c1 complex mediates electron transfer from ubiquinol to cytochrome c. Contributes to the generation of a proton gradient across the mitochondrial membrane that is then used for ATP synthesis.</text>
</comment>
<comment type="cofactor">
    <cofactor evidence="2">
        <name>heme b</name>
        <dbReference type="ChEBI" id="CHEBI:60344"/>
    </cofactor>
    <text evidence="2">Binds 2 heme b groups non-covalently.</text>
</comment>
<comment type="subunit">
    <text evidence="2">The cytochrome bc1 complex contains 11 subunits: 3 respiratory subunits (MT-CYB, CYC1 and UQCRFS1), 2 core proteins (UQCRC1 and UQCRC2) and 6 low-molecular weight proteins (UQCRH/QCR6, UQCRB/QCR7, UQCRQ/QCR8, UQCR10/QCR9, UQCR11/QCR10 and a cleavage product of UQCRFS1). This cytochrome bc1 complex then forms a dimer.</text>
</comment>
<comment type="subcellular location">
    <subcellularLocation>
        <location evidence="2">Mitochondrion inner membrane</location>
        <topology evidence="2">Multi-pass membrane protein</topology>
    </subcellularLocation>
</comment>
<comment type="miscellaneous">
    <text evidence="1">Heme 1 (or BL or b562) is low-potential and absorbs at about 562 nm, and heme 2 (or BH or b566) is high-potential and absorbs at about 566 nm.</text>
</comment>
<comment type="similarity">
    <text evidence="3 4">Belongs to the cytochrome b family.</text>
</comment>
<comment type="caution">
    <text evidence="2">The full-length protein contains only eight transmembrane helices, not nine as predicted by bioinformatics tools.</text>
</comment>